<reference key="1">
    <citation type="journal article" date="2001" name="J. Cancer Res. Clin. Oncol.">
        <title>Isolation and characterization of a novel cDNA, UBAP1, derived from the tumor suppressor locus in human chromosome 9p21-22.</title>
        <authorList>
            <person name="Qian J."/>
            <person name="Yang J."/>
            <person name="Zhang X."/>
            <person name="Zhang B."/>
            <person name="Wang J."/>
            <person name="Zhou M."/>
            <person name="Tang K."/>
            <person name="Li W."/>
            <person name="Zeng Z."/>
            <person name="Zhao X."/>
            <person name="Shen S."/>
            <person name="Li G."/>
        </authorList>
    </citation>
    <scope>NUCLEOTIDE SEQUENCE [MRNA] (ISOFORM 1)</scope>
    <scope>TISSUE SPECIFICITY</scope>
</reference>
<reference key="2">
    <citation type="journal article" date="2001" name="Genome Res.">
        <title>Towards a catalog of human genes and proteins: sequencing and analysis of 500 novel complete protein coding human cDNAs.</title>
        <authorList>
            <person name="Wiemann S."/>
            <person name="Weil B."/>
            <person name="Wellenreuther R."/>
            <person name="Gassenhuber J."/>
            <person name="Glassl S."/>
            <person name="Ansorge W."/>
            <person name="Boecher M."/>
            <person name="Bloecker H."/>
            <person name="Bauersachs S."/>
            <person name="Blum H."/>
            <person name="Lauber J."/>
            <person name="Duesterhoeft A."/>
            <person name="Beyer A."/>
            <person name="Koehrer K."/>
            <person name="Strack N."/>
            <person name="Mewes H.-W."/>
            <person name="Ottenwaelder B."/>
            <person name="Obermaier B."/>
            <person name="Tampe J."/>
            <person name="Heubner D."/>
            <person name="Wambutt R."/>
            <person name="Korn B."/>
            <person name="Klein M."/>
            <person name="Poustka A."/>
        </authorList>
    </citation>
    <scope>NUCLEOTIDE SEQUENCE [LARGE SCALE MRNA] (ISOFORM 1)</scope>
    <source>
        <tissue>Testis</tissue>
    </source>
</reference>
<reference key="3">
    <citation type="journal article" date="2004" name="Nat. Genet.">
        <title>Complete sequencing and characterization of 21,243 full-length human cDNAs.</title>
        <authorList>
            <person name="Ota T."/>
            <person name="Suzuki Y."/>
            <person name="Nishikawa T."/>
            <person name="Otsuki T."/>
            <person name="Sugiyama T."/>
            <person name="Irie R."/>
            <person name="Wakamatsu A."/>
            <person name="Hayashi K."/>
            <person name="Sato H."/>
            <person name="Nagai K."/>
            <person name="Kimura K."/>
            <person name="Makita H."/>
            <person name="Sekine M."/>
            <person name="Obayashi M."/>
            <person name="Nishi T."/>
            <person name="Shibahara T."/>
            <person name="Tanaka T."/>
            <person name="Ishii S."/>
            <person name="Yamamoto J."/>
            <person name="Saito K."/>
            <person name="Kawai Y."/>
            <person name="Isono Y."/>
            <person name="Nakamura Y."/>
            <person name="Nagahari K."/>
            <person name="Murakami K."/>
            <person name="Yasuda T."/>
            <person name="Iwayanagi T."/>
            <person name="Wagatsuma M."/>
            <person name="Shiratori A."/>
            <person name="Sudo H."/>
            <person name="Hosoiri T."/>
            <person name="Kaku Y."/>
            <person name="Kodaira H."/>
            <person name="Kondo H."/>
            <person name="Sugawara M."/>
            <person name="Takahashi M."/>
            <person name="Kanda K."/>
            <person name="Yokoi T."/>
            <person name="Furuya T."/>
            <person name="Kikkawa E."/>
            <person name="Omura Y."/>
            <person name="Abe K."/>
            <person name="Kamihara K."/>
            <person name="Katsuta N."/>
            <person name="Sato K."/>
            <person name="Tanikawa M."/>
            <person name="Yamazaki M."/>
            <person name="Ninomiya K."/>
            <person name="Ishibashi T."/>
            <person name="Yamashita H."/>
            <person name="Murakawa K."/>
            <person name="Fujimori K."/>
            <person name="Tanai H."/>
            <person name="Kimata M."/>
            <person name="Watanabe M."/>
            <person name="Hiraoka S."/>
            <person name="Chiba Y."/>
            <person name="Ishida S."/>
            <person name="Ono Y."/>
            <person name="Takiguchi S."/>
            <person name="Watanabe S."/>
            <person name="Yosida M."/>
            <person name="Hotuta T."/>
            <person name="Kusano J."/>
            <person name="Kanehori K."/>
            <person name="Takahashi-Fujii A."/>
            <person name="Hara H."/>
            <person name="Tanase T.-O."/>
            <person name="Nomura Y."/>
            <person name="Togiya S."/>
            <person name="Komai F."/>
            <person name="Hara R."/>
            <person name="Takeuchi K."/>
            <person name="Arita M."/>
            <person name="Imose N."/>
            <person name="Musashino K."/>
            <person name="Yuuki H."/>
            <person name="Oshima A."/>
            <person name="Sasaki N."/>
            <person name="Aotsuka S."/>
            <person name="Yoshikawa Y."/>
            <person name="Matsunawa H."/>
            <person name="Ichihara T."/>
            <person name="Shiohata N."/>
            <person name="Sano S."/>
            <person name="Moriya S."/>
            <person name="Momiyama H."/>
            <person name="Satoh N."/>
            <person name="Takami S."/>
            <person name="Terashima Y."/>
            <person name="Suzuki O."/>
            <person name="Nakagawa S."/>
            <person name="Senoh A."/>
            <person name="Mizoguchi H."/>
            <person name="Goto Y."/>
            <person name="Shimizu F."/>
            <person name="Wakebe H."/>
            <person name="Hishigaki H."/>
            <person name="Watanabe T."/>
            <person name="Sugiyama A."/>
            <person name="Takemoto M."/>
            <person name="Kawakami B."/>
            <person name="Yamazaki M."/>
            <person name="Watanabe K."/>
            <person name="Kumagai A."/>
            <person name="Itakura S."/>
            <person name="Fukuzumi Y."/>
            <person name="Fujimori Y."/>
            <person name="Komiyama M."/>
            <person name="Tashiro H."/>
            <person name="Tanigami A."/>
            <person name="Fujiwara T."/>
            <person name="Ono T."/>
            <person name="Yamada K."/>
            <person name="Fujii Y."/>
            <person name="Ozaki K."/>
            <person name="Hirao M."/>
            <person name="Ohmori Y."/>
            <person name="Kawabata A."/>
            <person name="Hikiji T."/>
            <person name="Kobatake N."/>
            <person name="Inagaki H."/>
            <person name="Ikema Y."/>
            <person name="Okamoto S."/>
            <person name="Okitani R."/>
            <person name="Kawakami T."/>
            <person name="Noguchi S."/>
            <person name="Itoh T."/>
            <person name="Shigeta K."/>
            <person name="Senba T."/>
            <person name="Matsumura K."/>
            <person name="Nakajima Y."/>
            <person name="Mizuno T."/>
            <person name="Morinaga M."/>
            <person name="Sasaki M."/>
            <person name="Togashi T."/>
            <person name="Oyama M."/>
            <person name="Hata H."/>
            <person name="Watanabe M."/>
            <person name="Komatsu T."/>
            <person name="Mizushima-Sugano J."/>
            <person name="Satoh T."/>
            <person name="Shirai Y."/>
            <person name="Takahashi Y."/>
            <person name="Nakagawa K."/>
            <person name="Okumura K."/>
            <person name="Nagase T."/>
            <person name="Nomura N."/>
            <person name="Kikuchi H."/>
            <person name="Masuho Y."/>
            <person name="Yamashita R."/>
            <person name="Nakai K."/>
            <person name="Yada T."/>
            <person name="Nakamura Y."/>
            <person name="Ohara O."/>
            <person name="Isogai T."/>
            <person name="Sugano S."/>
        </authorList>
    </citation>
    <scope>NUCLEOTIDE SEQUENCE [LARGE SCALE MRNA] (ISOFORMS 1 AND 4)</scope>
    <scope>NUCLEOTIDE SEQUENCE [LARGE SCALE MRNA] OF 11-502 (ISOFORM 3)</scope>
    <source>
        <tissue>Hippocampus</tissue>
        <tissue>Kidney</tissue>
    </source>
</reference>
<reference key="4">
    <citation type="submission" date="2004-06" db="EMBL/GenBank/DDBJ databases">
        <title>Cloning of human full open reading frames in Gateway(TM) system entry vector (pDONR201).</title>
        <authorList>
            <person name="Ebert L."/>
            <person name="Schick M."/>
            <person name="Neubert P."/>
            <person name="Schatten R."/>
            <person name="Henze S."/>
            <person name="Korn B."/>
        </authorList>
    </citation>
    <scope>NUCLEOTIDE SEQUENCE [LARGE SCALE MRNA] (ISOFORM 1)</scope>
</reference>
<reference key="5">
    <citation type="submission" date="2005-04" db="EMBL/GenBank/DDBJ databases">
        <authorList>
            <person name="Suzuki Y."/>
            <person name="Sugano S."/>
            <person name="Totoki Y."/>
            <person name="Toyoda A."/>
            <person name="Takeda T."/>
            <person name="Sakaki Y."/>
            <person name="Tanaka A."/>
            <person name="Yokoyama S."/>
        </authorList>
    </citation>
    <scope>NUCLEOTIDE SEQUENCE [LARGE SCALE MRNA] (ISOFORM 1)</scope>
    <scope>VARIANT LYS-357</scope>
    <source>
        <tissue>Stomach</tissue>
    </source>
</reference>
<reference key="6">
    <citation type="journal article" date="2004" name="Nature">
        <title>DNA sequence and analysis of human chromosome 9.</title>
        <authorList>
            <person name="Humphray S.J."/>
            <person name="Oliver K."/>
            <person name="Hunt A.R."/>
            <person name="Plumb R.W."/>
            <person name="Loveland J.E."/>
            <person name="Howe K.L."/>
            <person name="Andrews T.D."/>
            <person name="Searle S."/>
            <person name="Hunt S.E."/>
            <person name="Scott C.E."/>
            <person name="Jones M.C."/>
            <person name="Ainscough R."/>
            <person name="Almeida J.P."/>
            <person name="Ambrose K.D."/>
            <person name="Ashwell R.I.S."/>
            <person name="Babbage A.K."/>
            <person name="Babbage S."/>
            <person name="Bagguley C.L."/>
            <person name="Bailey J."/>
            <person name="Banerjee R."/>
            <person name="Barker D.J."/>
            <person name="Barlow K.F."/>
            <person name="Bates K."/>
            <person name="Beasley H."/>
            <person name="Beasley O."/>
            <person name="Bird C.P."/>
            <person name="Bray-Allen S."/>
            <person name="Brown A.J."/>
            <person name="Brown J.Y."/>
            <person name="Burford D."/>
            <person name="Burrill W."/>
            <person name="Burton J."/>
            <person name="Carder C."/>
            <person name="Carter N.P."/>
            <person name="Chapman J.C."/>
            <person name="Chen Y."/>
            <person name="Clarke G."/>
            <person name="Clark S.Y."/>
            <person name="Clee C.M."/>
            <person name="Clegg S."/>
            <person name="Collier R.E."/>
            <person name="Corby N."/>
            <person name="Crosier M."/>
            <person name="Cummings A.T."/>
            <person name="Davies J."/>
            <person name="Dhami P."/>
            <person name="Dunn M."/>
            <person name="Dutta I."/>
            <person name="Dyer L.W."/>
            <person name="Earthrowl M.E."/>
            <person name="Faulkner L."/>
            <person name="Fleming C.J."/>
            <person name="Frankish A."/>
            <person name="Frankland J.A."/>
            <person name="French L."/>
            <person name="Fricker D.G."/>
            <person name="Garner P."/>
            <person name="Garnett J."/>
            <person name="Ghori J."/>
            <person name="Gilbert J.G.R."/>
            <person name="Glison C."/>
            <person name="Grafham D.V."/>
            <person name="Gribble S."/>
            <person name="Griffiths C."/>
            <person name="Griffiths-Jones S."/>
            <person name="Grocock R."/>
            <person name="Guy J."/>
            <person name="Hall R.E."/>
            <person name="Hammond S."/>
            <person name="Harley J.L."/>
            <person name="Harrison E.S.I."/>
            <person name="Hart E.A."/>
            <person name="Heath P.D."/>
            <person name="Henderson C.D."/>
            <person name="Hopkins B.L."/>
            <person name="Howard P.J."/>
            <person name="Howden P.J."/>
            <person name="Huckle E."/>
            <person name="Johnson C."/>
            <person name="Johnson D."/>
            <person name="Joy A.A."/>
            <person name="Kay M."/>
            <person name="Keenan S."/>
            <person name="Kershaw J.K."/>
            <person name="Kimberley A.M."/>
            <person name="King A."/>
            <person name="Knights A."/>
            <person name="Laird G.K."/>
            <person name="Langford C."/>
            <person name="Lawlor S."/>
            <person name="Leongamornlert D.A."/>
            <person name="Leversha M."/>
            <person name="Lloyd C."/>
            <person name="Lloyd D.M."/>
            <person name="Lovell J."/>
            <person name="Martin S."/>
            <person name="Mashreghi-Mohammadi M."/>
            <person name="Matthews L."/>
            <person name="McLaren S."/>
            <person name="McLay K.E."/>
            <person name="McMurray A."/>
            <person name="Milne S."/>
            <person name="Nickerson T."/>
            <person name="Nisbett J."/>
            <person name="Nordsiek G."/>
            <person name="Pearce A.V."/>
            <person name="Peck A.I."/>
            <person name="Porter K.M."/>
            <person name="Pandian R."/>
            <person name="Pelan S."/>
            <person name="Phillimore B."/>
            <person name="Povey S."/>
            <person name="Ramsey Y."/>
            <person name="Rand V."/>
            <person name="Scharfe M."/>
            <person name="Sehra H.K."/>
            <person name="Shownkeen R."/>
            <person name="Sims S.K."/>
            <person name="Skuce C.D."/>
            <person name="Smith M."/>
            <person name="Steward C.A."/>
            <person name="Swarbreck D."/>
            <person name="Sycamore N."/>
            <person name="Tester J."/>
            <person name="Thorpe A."/>
            <person name="Tracey A."/>
            <person name="Tromans A."/>
            <person name="Thomas D.W."/>
            <person name="Wall M."/>
            <person name="Wallis J.M."/>
            <person name="West A.P."/>
            <person name="Whitehead S.L."/>
            <person name="Willey D.L."/>
            <person name="Williams S.A."/>
            <person name="Wilming L."/>
            <person name="Wray P.W."/>
            <person name="Young L."/>
            <person name="Ashurst J.L."/>
            <person name="Coulson A."/>
            <person name="Blocker H."/>
            <person name="Durbin R.M."/>
            <person name="Sulston J.E."/>
            <person name="Hubbard T."/>
            <person name="Jackson M.J."/>
            <person name="Bentley D.R."/>
            <person name="Beck S."/>
            <person name="Rogers J."/>
            <person name="Dunham I."/>
        </authorList>
    </citation>
    <scope>NUCLEOTIDE SEQUENCE [LARGE SCALE GENOMIC DNA] (ISOFORMS 1 AND 2)</scope>
</reference>
<reference key="7">
    <citation type="submission" date="2005-09" db="EMBL/GenBank/DDBJ databases">
        <authorList>
            <person name="Mural R.J."/>
            <person name="Istrail S."/>
            <person name="Sutton G.G."/>
            <person name="Florea L."/>
            <person name="Halpern A.L."/>
            <person name="Mobarry C.M."/>
            <person name="Lippert R."/>
            <person name="Walenz B."/>
            <person name="Shatkay H."/>
            <person name="Dew I."/>
            <person name="Miller J.R."/>
            <person name="Flanigan M.J."/>
            <person name="Edwards N.J."/>
            <person name="Bolanos R."/>
            <person name="Fasulo D."/>
            <person name="Halldorsson B.V."/>
            <person name="Hannenhalli S."/>
            <person name="Turner R."/>
            <person name="Yooseph S."/>
            <person name="Lu F."/>
            <person name="Nusskern D.R."/>
            <person name="Shue B.C."/>
            <person name="Zheng X.H."/>
            <person name="Zhong F."/>
            <person name="Delcher A.L."/>
            <person name="Huson D.H."/>
            <person name="Kravitz S.A."/>
            <person name="Mouchard L."/>
            <person name="Reinert K."/>
            <person name="Remington K.A."/>
            <person name="Clark A.G."/>
            <person name="Waterman M.S."/>
            <person name="Eichler E.E."/>
            <person name="Adams M.D."/>
            <person name="Hunkapiller M.W."/>
            <person name="Myers E.W."/>
            <person name="Venter J.C."/>
        </authorList>
    </citation>
    <scope>NUCLEOTIDE SEQUENCE [LARGE SCALE GENOMIC DNA]</scope>
</reference>
<reference key="8">
    <citation type="journal article" date="2004" name="Genome Res.">
        <title>The status, quality, and expansion of the NIH full-length cDNA project: the Mammalian Gene Collection (MGC).</title>
        <authorList>
            <consortium name="The MGC Project Team"/>
        </authorList>
    </citation>
    <scope>NUCLEOTIDE SEQUENCE [LARGE SCALE MRNA] (ISOFORM 1)</scope>
    <source>
        <tissue>Colon</tissue>
    </source>
</reference>
<reference key="9">
    <citation type="journal article" date="2011" name="Curr. Biol.">
        <title>UBAP1 is a component of an endosome-specific ESCRT-I complex that is essential for MVB sorting.</title>
        <authorList>
            <person name="Stefani F."/>
            <person name="Zhang L."/>
            <person name="Taylor S."/>
            <person name="Donovan J."/>
            <person name="Rollinson S."/>
            <person name="Doyotte A."/>
            <person name="Brownhill K."/>
            <person name="Bennion J."/>
            <person name="Pickering-Brown S."/>
            <person name="Woodman P."/>
        </authorList>
    </citation>
    <scope>FUNCTION</scope>
    <scope>INTERACTION WITH PTPN23</scope>
    <scope>IDENTIFICATION IN ESCRT-I COMPLEX</scope>
    <scope>SUBUNIT</scope>
    <scope>SUBCELLULAR LOCATION</scope>
    <scope>DOMAIN</scope>
    <scope>MUTAGENESIS OF PRO-37; GLU-59; TYR-404 AND PHE-472</scope>
</reference>
<reference key="10">
    <citation type="journal article" date="2013" name="J. Proteome Res.">
        <title>Toward a comprehensive characterization of a human cancer cell phosphoproteome.</title>
        <authorList>
            <person name="Zhou H."/>
            <person name="Di Palma S."/>
            <person name="Preisinger C."/>
            <person name="Peng M."/>
            <person name="Polat A.N."/>
            <person name="Heck A.J."/>
            <person name="Mohammed S."/>
        </authorList>
    </citation>
    <scope>PHOSPHORYLATION [LARGE SCALE ANALYSIS] AT SER-205 AND SER-289</scope>
    <scope>IDENTIFICATION BY MASS SPECTROMETRY [LARGE SCALE ANALYSIS]</scope>
    <source>
        <tissue>Cervix carcinoma</tissue>
        <tissue>Erythroleukemia</tissue>
    </source>
</reference>
<reference key="11">
    <citation type="journal article" date="2014" name="J. Cell Sci.">
        <title>The molecular basis for selective assembly of the UBAP1-containing endosome-specific ESCRT-I complex.</title>
        <authorList>
            <person name="Wunderley L."/>
            <person name="Brownhill K."/>
            <person name="Stefani F."/>
            <person name="Tabernero L."/>
            <person name="Woodman P."/>
        </authorList>
    </citation>
    <scope>FUNCTION</scope>
    <scope>INTERACTION WITH VPS37A</scope>
</reference>
<reference key="12">
    <citation type="journal article" date="2014" name="J. Proteomics">
        <title>An enzyme assisted RP-RPLC approach for in-depth analysis of human liver phosphoproteome.</title>
        <authorList>
            <person name="Bian Y."/>
            <person name="Song C."/>
            <person name="Cheng K."/>
            <person name="Dong M."/>
            <person name="Wang F."/>
            <person name="Huang J."/>
            <person name="Sun D."/>
            <person name="Wang L."/>
            <person name="Ye M."/>
            <person name="Zou H."/>
        </authorList>
    </citation>
    <scope>PHOSPHORYLATION [LARGE SCALE ANALYSIS] AT SER-146</scope>
    <scope>IDENTIFICATION BY MASS SPECTROMETRY [LARGE SCALE ANALYSIS]</scope>
    <source>
        <tissue>Liver</tissue>
    </source>
</reference>
<reference key="13">
    <citation type="submission" date="2004-11" db="PDB data bank">
        <title>Solution structure of UBA domain of human ubiquitin associated protein 1 (UBAP1).</title>
        <authorList>
            <consortium name="RIKEN structural genomics initiative (RSGI)"/>
        </authorList>
    </citation>
    <scope>STRUCTURE BY NMR OF 381-430</scope>
</reference>
<reference key="14">
    <citation type="journal article" date="2012" name="Structure">
        <title>The UBAP1 subunit of ESCRT-I interacts with ubiquitin via a SOUBA domain.</title>
        <authorList>
            <person name="Agromayor M."/>
            <person name="Soler N."/>
            <person name="Caballe A."/>
            <person name="Kueck T."/>
            <person name="Freund S.M."/>
            <person name="Allen M.D."/>
            <person name="Bycroft M."/>
            <person name="Perisic O."/>
            <person name="Ye Y."/>
            <person name="McDonald B."/>
            <person name="Scheel H."/>
            <person name="Hofmann K."/>
            <person name="Neil S.J."/>
            <person name="Martin-Serrano J."/>
            <person name="Williams R.L."/>
        </authorList>
    </citation>
    <scope>X-RAY CRYSTALLOGRAPHY (1.65 ANGSTROMS) OF 389-502</scope>
    <scope>FUNCTION</scope>
    <scope>IDENTIFICATION IN ESCRT-I COMPLEX</scope>
    <scope>SUBUNIT</scope>
    <scope>DOMAIN</scope>
    <scope>MUTAGENESIS OF 17-LEU--ASP-19 AND 20-VAL--PHE-22</scope>
</reference>
<reference evidence="17" key="15">
    <citation type="journal article" date="2016" name="Structure">
        <title>Structural basis for selective interaction between the ESCRT regulator HD-PTP and UBAP1.</title>
        <authorList>
            <person name="Gahloth D."/>
            <person name="Levy C."/>
            <person name="Heaven G."/>
            <person name="Stefani F."/>
            <person name="Wunderley L."/>
            <person name="Mould P."/>
            <person name="Cliff M.J."/>
            <person name="Bella J."/>
            <person name="Fielding A.J."/>
            <person name="Woodman P."/>
            <person name="Tabernero L."/>
        </authorList>
    </citation>
    <scope>X-RAY CRYSTALLOGRAPHY (2.55 ANGSTROMS) OF 261-280 IN COMPLEX WITH PTPN23</scope>
    <scope>MUTAGENESIS OF PHE-268; PRO-269 AND LEU-271</scope>
</reference>
<reference key="16">
    <citation type="journal article" date="2019" name="Am. J. Hum. Genet.">
        <title>Truncating mutations in UBAP1 cause hereditary spastic paraplegia.</title>
        <authorList>
            <person name="Farazi Fard M.A."/>
            <person name="Rebelo A.P."/>
            <person name="Buglo E."/>
            <person name="Nemati H."/>
            <person name="Dastsooz H."/>
            <person name="Gehweiler I."/>
            <person name="Reich S."/>
            <person name="Reichbauer J."/>
            <person name="Quintans B."/>
            <person name="Ordonez-Ugalde A."/>
            <person name="Cortese A."/>
            <person name="Courel S."/>
            <person name="Abreu L."/>
            <person name="Powell E."/>
            <person name="Danzi M.C."/>
            <person name="Martuscelli N.B."/>
            <person name="Bis-Brewer D.M."/>
            <person name="Tao F."/>
            <person name="Zarei F."/>
            <person name="Habibzadeh P."/>
            <person name="Yavarian M."/>
            <person name="Modarresi F."/>
            <person name="Silawi M."/>
            <person name="Tabatabaei Z."/>
            <person name="Yousefi M."/>
            <person name="Farpour H.R."/>
            <person name="Kessler C."/>
            <person name="Mangold E."/>
            <person name="Kobeleva X."/>
            <person name="Tournev I."/>
            <person name="Chamova T."/>
            <person name="Mueller A.J."/>
            <person name="Haack T.B."/>
            <person name="Tarnopolsky M."/>
            <person name="Gan-Or Z."/>
            <person name="Rouleau G.A."/>
            <person name="Synofzik M."/>
            <person name="Sobrido M.J."/>
            <person name="Jordanova A."/>
            <person name="Schuele R."/>
            <person name="Zuchner S."/>
            <person name="Faghihi M.A."/>
        </authorList>
    </citation>
    <scope>INVOLVEMENT IN SPG80</scope>
    <scope>VARIANT SPG80 125-GLN--SER-502 DEL</scope>
    <scope>INTERACTION WITH VPS28</scope>
    <scope>UBIQUITIN-BINDING</scope>
</reference>
<reference key="17">
    <citation type="journal article" date="2019" name="Brain">
        <title>Stop-gain mutations in UBAP1 cause pure autosomal-dominant spastic paraplegia.</title>
        <authorList>
            <person name="Lin X."/>
            <person name="Su H.Z."/>
            <person name="Dong E.L."/>
            <person name="Lin X.H."/>
            <person name="Zhao M."/>
            <person name="Yang C."/>
            <person name="Wang C."/>
            <person name="Wang J."/>
            <person name="Chen Y.J."/>
            <person name="Yu H."/>
            <person name="Xu J."/>
            <person name="Ma L.X."/>
            <person name="Xiong Z.Q."/>
            <person name="Wang N."/>
            <person name="Chen W.J."/>
        </authorList>
    </citation>
    <scope>VARIANT SPG80 176-GLU--SER-502 DEL</scope>
    <scope>FUNCTION</scope>
    <scope>SUBUNIT</scope>
</reference>
<keyword id="KW-0002">3D-structure</keyword>
<keyword id="KW-0025">Alternative splicing</keyword>
<keyword id="KW-0963">Cytoplasm</keyword>
<keyword id="KW-0225">Disease variant</keyword>
<keyword id="KW-0967">Endosome</keyword>
<keyword id="KW-0890">Hereditary spastic paraplegia</keyword>
<keyword id="KW-0523">Neurodegeneration</keyword>
<keyword id="KW-0597">Phosphoprotein</keyword>
<keyword id="KW-0653">Protein transport</keyword>
<keyword id="KW-1267">Proteomics identification</keyword>
<keyword id="KW-1185">Reference proteome</keyword>
<keyword id="KW-0677">Repeat</keyword>
<keyword id="KW-0813">Transport</keyword>
<protein>
    <recommendedName>
        <fullName evidence="12">Ubiquitin-associated protein 1</fullName>
        <shortName evidence="12">UBAP-1</shortName>
    </recommendedName>
    <alternativeName>
        <fullName>Nasopharyngeal carcinoma-associated gene 20 protein</fullName>
    </alternativeName>
</protein>
<comment type="function">
    <text evidence="5 6 7 10">Component of the ESCRT-I complex, a regulator of vesicular trafficking process (PubMed:21757351, PubMed:22405001, PubMed:31203368). Binds to ubiquitinated cargo proteins and is required for the sorting of endocytic ubiquitinated cargos into multivesicular bodies (MVBs) (PubMed:21757351, PubMed:22405001). Plays a role in the proteasomal degradation of ubiquitinated cell-surface proteins, such as EGFR and BST2 (PubMed:22405001, PubMed:24284069, PubMed:31203368).</text>
</comment>
<comment type="subunit">
    <text evidence="5 6 7 8 9 10 15">Component of an ESCRT-I complex (endosomal sorting complex required for transport I) which consists of TSG101, VPS28, VPS37A and UBAP1 in a 1:1:1:1 stoichiometry (Probable) (PubMed:21757351, PubMed:22405001, PubMed:24284069, PubMed:31203368). Interacts with PTPN23 (PubMed:21757351, PubMed:27839950). Interacts (via UBA domains) with ubiquitinated proteins (PubMed:22405001, PubMed:30929741).</text>
</comment>
<comment type="interaction">
    <interactant intactId="EBI-9641159">
        <id>Q9NZ09</id>
    </interactant>
    <interactant intactId="EBI-953909">
        <id>P45877</id>
        <label>PPIC</label>
    </interactant>
    <organismsDiffer>false</organismsDiffer>
    <experiments>3</experiments>
</comment>
<comment type="subcellular location">
    <subcellularLocation>
        <location evidence="5">Cytoplasm</location>
        <location evidence="5">Cytosol</location>
    </subcellularLocation>
    <subcellularLocation>
        <location evidence="5">Endosome</location>
    </subcellularLocation>
    <text evidence="5">Predominantly cytosolic (PubMed:21757351). Recruited to endosomes as part of the ESCRT-I complex (PubMed:21757351).</text>
</comment>
<comment type="alternative products">
    <event type="alternative splicing"/>
    <isoform>
        <id>Q9NZ09-1</id>
        <name>1</name>
        <sequence type="displayed"/>
    </isoform>
    <isoform>
        <id>Q9NZ09-2</id>
        <name>2</name>
        <sequence type="described" ref="VSP_013650"/>
    </isoform>
    <isoform>
        <id>Q9NZ09-3</id>
        <name>3</name>
        <sequence type="described" ref="VSP_046866"/>
    </isoform>
    <isoform>
        <id>Q9NZ09-4</id>
        <name>4</name>
        <sequence type="described" ref="VSP_046867"/>
    </isoform>
</comment>
<comment type="tissue specificity">
    <text evidence="4">Ubiquitous. Highly expressed in heart, brain, placenta, lung, liver, skeletal muscle and pancreas.</text>
</comment>
<comment type="domain">
    <text evidence="5 6">The UMA domain mediates association with the ESCRT-I complex.</text>
</comment>
<comment type="disease" evidence="9 10">
    <disease id="DI-05554">
        <name>Spastic paraplegia 80, autosomal dominant</name>
        <acronym>SPG80</acronym>
        <description>A form of spastic paraplegia, a neurodegenerative disorder characterized by a slow, gradual, progressive weakness and spasticity of the lower limbs. Rate of progression and the severity of symptoms are quite variable. Initial symptoms may include difficulty with balance, weakness and stiffness in the legs, muscle spasms, and dragging the toes when walking. In some forms of the disorder, bladder symptoms (such as incontinence) may appear, or the weakness and stiffness may spread to other parts of the body.</description>
        <dbReference type="MIM" id="618418"/>
    </disease>
    <text>The disease is caused by variants affecting the gene represented in this entry.</text>
</comment>
<comment type="caution">
    <text evidence="6 7">According to a report, can also be a component of ESCRT-I complexes containing VPS37B, VPS37C or VPS37D (PubMed:22405001). However, another publication showed that UBAP1 has specificity for complexes containing VPS37A and not VPS37 paralogs (PubMed:24284069).</text>
</comment>
<comment type="sequence caution" evidence="14">
    <conflict type="erroneous initiation">
        <sequence resource="EMBL-CDS" id="BAC11162"/>
    </conflict>
</comment>
<comment type="sequence caution" evidence="14">
    <conflict type="erroneous initiation">
        <sequence resource="EMBL-CDS" id="BAH12084"/>
    </conflict>
    <text>Truncated N-terminus.</text>
</comment>
<proteinExistence type="evidence at protein level"/>
<organism>
    <name type="scientific">Homo sapiens</name>
    <name type="common">Human</name>
    <dbReference type="NCBI Taxonomy" id="9606"/>
    <lineage>
        <taxon>Eukaryota</taxon>
        <taxon>Metazoa</taxon>
        <taxon>Chordata</taxon>
        <taxon>Craniata</taxon>
        <taxon>Vertebrata</taxon>
        <taxon>Euteleostomi</taxon>
        <taxon>Mammalia</taxon>
        <taxon>Eutheria</taxon>
        <taxon>Euarchontoglires</taxon>
        <taxon>Primates</taxon>
        <taxon>Haplorrhini</taxon>
        <taxon>Catarrhini</taxon>
        <taxon>Hominidae</taxon>
        <taxon>Homo</taxon>
    </lineage>
</organism>
<evidence type="ECO:0000255" key="1">
    <source>
        <dbReference type="PROSITE-ProRule" id="PRU00212"/>
    </source>
</evidence>
<evidence type="ECO:0000255" key="2">
    <source>
        <dbReference type="PROSITE-ProRule" id="PRU00830"/>
    </source>
</evidence>
<evidence type="ECO:0000256" key="3">
    <source>
        <dbReference type="SAM" id="MobiDB-lite"/>
    </source>
</evidence>
<evidence type="ECO:0000269" key="4">
    <source>
    </source>
</evidence>
<evidence type="ECO:0000269" key="5">
    <source>
    </source>
</evidence>
<evidence type="ECO:0000269" key="6">
    <source>
    </source>
</evidence>
<evidence type="ECO:0000269" key="7">
    <source>
    </source>
</evidence>
<evidence type="ECO:0000269" key="8">
    <source>
    </source>
</evidence>
<evidence type="ECO:0000269" key="9">
    <source>
    </source>
</evidence>
<evidence type="ECO:0000269" key="10">
    <source>
    </source>
</evidence>
<evidence type="ECO:0000269" key="11">
    <source ref="5"/>
</evidence>
<evidence type="ECO:0000303" key="12">
    <source>
    </source>
</evidence>
<evidence type="ECO:0000303" key="13">
    <source>
    </source>
</evidence>
<evidence type="ECO:0000305" key="14"/>
<evidence type="ECO:0000305" key="15">
    <source>
    </source>
</evidence>
<evidence type="ECO:0000312" key="16">
    <source>
        <dbReference type="HGNC" id="HGNC:12461"/>
    </source>
</evidence>
<evidence type="ECO:0007744" key="17">
    <source>
        <dbReference type="PDB" id="5LM1"/>
    </source>
</evidence>
<evidence type="ECO:0007744" key="18">
    <source>
    </source>
</evidence>
<evidence type="ECO:0007744" key="19">
    <source>
    </source>
</evidence>
<evidence type="ECO:0007829" key="20">
    <source>
        <dbReference type="PDB" id="1WGN"/>
    </source>
</evidence>
<evidence type="ECO:0007829" key="21">
    <source>
        <dbReference type="PDB" id="4AE4"/>
    </source>
</evidence>
<evidence type="ECO:0007829" key="22">
    <source>
        <dbReference type="PDB" id="5LM1"/>
    </source>
</evidence>
<feature type="chain" id="PRO_0000211017" description="Ubiquitin-associated protein 1">
    <location>
        <begin position="1"/>
        <end position="502"/>
    </location>
</feature>
<feature type="domain" description="UMA" evidence="2">
    <location>
        <begin position="17"/>
        <end position="63"/>
    </location>
</feature>
<feature type="domain" description="UBA 1" evidence="1">
    <location>
        <begin position="389"/>
        <end position="430"/>
    </location>
</feature>
<feature type="domain" description="UBA 2" evidence="1">
    <location>
        <begin position="451"/>
        <end position="498"/>
    </location>
</feature>
<feature type="region of interest" description="Interaction with ESCRT-I" evidence="7">
    <location>
        <begin position="1"/>
        <end position="95"/>
    </location>
</feature>
<feature type="region of interest" description="Disordered" evidence="3">
    <location>
        <begin position="86"/>
        <end position="117"/>
    </location>
</feature>
<feature type="region of interest" description="Interaction with PTPN23" evidence="8">
    <location>
        <begin position="260"/>
        <end position="290"/>
    </location>
</feature>
<feature type="compositionally biased region" description="Basic and acidic residues" evidence="3">
    <location>
        <begin position="86"/>
        <end position="100"/>
    </location>
</feature>
<feature type="compositionally biased region" description="Polar residues" evidence="3">
    <location>
        <begin position="102"/>
        <end position="112"/>
    </location>
</feature>
<feature type="modified residue" description="Phosphoserine" evidence="19">
    <location>
        <position position="146"/>
    </location>
</feature>
<feature type="modified residue" description="Phosphoserine" evidence="18">
    <location>
        <position position="205"/>
    </location>
</feature>
<feature type="modified residue" description="Phosphoserine" evidence="18">
    <location>
        <position position="289"/>
    </location>
</feature>
<feature type="splice variant" id="VSP_046866" description="In isoform 3." evidence="13">
    <original>MASKKLGADFHGTFSYLDDVPFKTGDKFKTPAKVGLPIGFSLPDCLQVVREVQ</original>
    <variation>MSGAVRGRRREVGLQHGGCGTGGGYGDGLARSGQSWRWWRSLSLGAVGSSAGTEPGRPAGASTFRLLRRRQQRHSGSKWLLRSWVQIFM</variation>
    <location>
        <begin position="1"/>
        <end position="53"/>
    </location>
</feature>
<feature type="splice variant" id="VSP_046867" description="In isoform 4." evidence="13">
    <original>MASKKLGADFH</original>
    <variation>MSGAVRGRRREVGLQHGGCGTGGGYGDGLARSGQSWRWWRSLSLGAVGSSAGTEPGRPAGASTFRLLRRRQQRHS</variation>
    <location>
        <begin position="1"/>
        <end position="11"/>
    </location>
</feature>
<feature type="splice variant" id="VSP_013650" description="In isoform 2." evidence="14">
    <location>
        <begin position="362"/>
        <end position="422"/>
    </location>
</feature>
<feature type="sequence variant" id="VAR_082199" description="In SPG80." evidence="9">
    <location>
        <begin position="125"/>
        <end position="502"/>
    </location>
</feature>
<feature type="sequence variant" id="VAR_082200" description="In SPG80; uncertain significance." evidence="10">
    <location>
        <begin position="176"/>
        <end position="502"/>
    </location>
</feature>
<feature type="sequence variant" id="VAR_034577" description="In dbSNP:rs16935457." evidence="11">
    <original>N</original>
    <variation>K</variation>
    <location>
        <position position="357"/>
    </location>
</feature>
<feature type="mutagenesis site" description="Abolishes association with the ESCRT-I complex." evidence="6">
    <original>LDD</original>
    <variation>AAA</variation>
    <location>
        <begin position="17"/>
        <end position="19"/>
    </location>
</feature>
<feature type="mutagenesis site" description="Abolishes association with the ESCRT-I complex." evidence="6">
    <original>VPF</original>
    <variation>AAA</variation>
    <location>
        <begin position="20"/>
        <end position="22"/>
    </location>
</feature>
<feature type="mutagenesis site" description="Abolishes association with the ESCRT-I complex." evidence="5">
    <original>P</original>
    <variation>A</variation>
    <location>
        <position position="37"/>
    </location>
</feature>
<feature type="mutagenesis site" description="Abolishes association with the ESCRT-I complex." evidence="5">
    <original>E</original>
    <variation>G</variation>
    <location>
        <position position="59"/>
    </location>
</feature>
<feature type="mutagenesis site" description="Abolished interaction with PTPN23." evidence="8">
    <original>F</original>
    <variation>S</variation>
    <location>
        <position position="268"/>
    </location>
</feature>
<feature type="mutagenesis site" description="Does not affect interaction with PTPN23." evidence="8">
    <original>P</original>
    <variation>A</variation>
    <location>
        <position position="269"/>
    </location>
</feature>
<feature type="mutagenesis site" description="Does not affect interaction with PTPN23." evidence="8">
    <original>L</original>
    <variation>A</variation>
    <location>
        <position position="271"/>
    </location>
</feature>
<feature type="mutagenesis site" description="Strongly reduced interaction with ubiquitinated proteins." evidence="5">
    <original>Y</original>
    <variation>A</variation>
    <location>
        <position position="404"/>
    </location>
</feature>
<feature type="mutagenesis site" description="Strongly reduced interaction with ubiquitinated proteins." evidence="5">
    <original>F</original>
    <variation>A</variation>
    <location>
        <position position="472"/>
    </location>
</feature>
<feature type="sequence conflict" description="In Ref. 4; CAG38582." evidence="14" ref="4">
    <original>C</original>
    <variation>R</variation>
    <location>
        <position position="81"/>
    </location>
</feature>
<feature type="sequence conflict" description="In Ref. 3; BAH14025." evidence="14" ref="3">
    <original>T</original>
    <variation>N</variation>
    <location>
        <position position="187"/>
    </location>
</feature>
<feature type="sequence conflict" description="In Ref. 3; BAC11176." evidence="14" ref="3">
    <original>E</original>
    <variation>D</variation>
    <location>
        <position position="331"/>
    </location>
</feature>
<feature type="sequence conflict" description="In Ref. 3; BAH12084." evidence="14" ref="3">
    <original>T</original>
    <variation>M</variation>
    <location>
        <position position="398"/>
    </location>
</feature>
<feature type="sequence conflict" description="In Ref. 3; BAC11323." evidence="14" ref="3">
    <original>G</original>
    <variation>C</variation>
    <location>
        <position position="403"/>
    </location>
</feature>
<feature type="helix" evidence="22">
    <location>
        <begin position="263"/>
        <end position="265"/>
    </location>
</feature>
<feature type="helix" evidence="20">
    <location>
        <begin position="383"/>
        <end position="386"/>
    </location>
</feature>
<feature type="helix" evidence="21">
    <location>
        <begin position="390"/>
        <end position="401"/>
    </location>
</feature>
<feature type="helix" evidence="21">
    <location>
        <begin position="406"/>
        <end position="416"/>
    </location>
</feature>
<feature type="helix" evidence="21">
    <location>
        <begin position="420"/>
        <end position="435"/>
    </location>
</feature>
<feature type="helix" evidence="21">
    <location>
        <begin position="440"/>
        <end position="449"/>
    </location>
</feature>
<feature type="helix" evidence="21">
    <location>
        <begin position="454"/>
        <end position="469"/>
    </location>
</feature>
<feature type="helix" evidence="21">
    <location>
        <begin position="474"/>
        <end position="483"/>
    </location>
</feature>
<feature type="turn" evidence="21">
    <location>
        <begin position="484"/>
        <end position="486"/>
    </location>
</feature>
<feature type="helix" evidence="21">
    <location>
        <begin position="488"/>
        <end position="498"/>
    </location>
</feature>
<accession>Q9NZ09</accession>
<accession>B7Z348</accession>
<accession>B7Z8N9</accession>
<accession>D3DRL7</accession>
<accession>F5GXE2</accession>
<accession>F5H0J8</accession>
<accession>Q4V759</accession>
<accession>Q53FP7</accession>
<accession>Q5T7B3</accession>
<accession>Q6FI75</accession>
<accession>Q8NC52</accession>
<accession>Q8NCG6</accession>
<accession>Q8NCH9</accession>
<gene>
    <name evidence="12 16" type="primary">UBAP1</name>
    <name type="ORF">NAG20</name>
</gene>
<sequence length="502" mass="55084">MASKKLGADFHGTFSYLDDVPFKTGDKFKTPAKVGLPIGFSLPDCLQVVREVQYDFSLEKKTIEWAEEIKKIEEAEREAECKIAEAEAKVNSKSGPEGDSKMSFSKTHSTATMPPPINPILASLQHNSILTPTRVSSSATKQKVLSPPHIKADFNLADFECEEDPFDNLELKTIDEKEELRNILVGTTGPIMAQLLDNNLPRGGSGSVLQDEEVLASLERATLDFKPLHKPNGFITLPQLGNCEKMSLSSKVSLPPIPAVSNIKSLSFPKLDSDDSNQKTAKLASTFHSTSCLRNGTFQNSLKPSTQSSASELNGHHTLGLSALNLDSGTEMPALTSSQMPSLSVLSVCTEESSPPNTGPTVTPPNFSVSQVPNMPSCPQAYSELQMLSPSERQCVETVVNMGYSYECVLRAMKKKGENIEQILDYLFAHGQLCEKGFDPLLVEEALEMHQCSEEKMMEFLQLMSKFKEMGFELKDIKEVLLLHNNDQDNALEDLMARAGAS</sequence>
<name>UBAP1_HUMAN</name>
<dbReference type="EMBL" id="AF222043">
    <property type="protein sequence ID" value="AAF37827.2"/>
    <property type="molecule type" value="mRNA"/>
</dbReference>
<dbReference type="EMBL" id="AL136733">
    <property type="protein sequence ID" value="CAB66667.1"/>
    <property type="molecule type" value="mRNA"/>
</dbReference>
<dbReference type="EMBL" id="AK074724">
    <property type="protein sequence ID" value="BAC11162.1"/>
    <property type="status" value="ALT_INIT"/>
    <property type="molecule type" value="mRNA"/>
</dbReference>
<dbReference type="EMBL" id="AK074745">
    <property type="protein sequence ID" value="BAC11176.1"/>
    <property type="molecule type" value="mRNA"/>
</dbReference>
<dbReference type="EMBL" id="AK074812">
    <property type="protein sequence ID" value="BAC11224.1"/>
    <property type="molecule type" value="mRNA"/>
</dbReference>
<dbReference type="EMBL" id="AK074969">
    <property type="protein sequence ID" value="BAC11323.1"/>
    <property type="molecule type" value="mRNA"/>
</dbReference>
<dbReference type="EMBL" id="AK074995">
    <property type="protein sequence ID" value="BAC11342.1"/>
    <property type="molecule type" value="mRNA"/>
</dbReference>
<dbReference type="EMBL" id="AK295482">
    <property type="protein sequence ID" value="BAH12084.1"/>
    <property type="status" value="ALT_INIT"/>
    <property type="molecule type" value="mRNA"/>
</dbReference>
<dbReference type="EMBL" id="AK303711">
    <property type="protein sequence ID" value="BAH14025.1"/>
    <property type="molecule type" value="mRNA"/>
</dbReference>
<dbReference type="EMBL" id="CR533551">
    <property type="protein sequence ID" value="CAG38582.1"/>
    <property type="molecule type" value="mRNA"/>
</dbReference>
<dbReference type="EMBL" id="AK223235">
    <property type="protein sequence ID" value="BAD96955.1"/>
    <property type="molecule type" value="mRNA"/>
</dbReference>
<dbReference type="EMBL" id="AL353662">
    <property type="status" value="NOT_ANNOTATED_CDS"/>
    <property type="molecule type" value="Genomic_DNA"/>
</dbReference>
<dbReference type="EMBL" id="CH471071">
    <property type="protein sequence ID" value="EAW58467.1"/>
    <property type="molecule type" value="Genomic_DNA"/>
</dbReference>
<dbReference type="EMBL" id="CH471071">
    <property type="protein sequence ID" value="EAW58468.1"/>
    <property type="molecule type" value="Genomic_DNA"/>
</dbReference>
<dbReference type="EMBL" id="CH471071">
    <property type="protein sequence ID" value="EAW58469.1"/>
    <property type="molecule type" value="Genomic_DNA"/>
</dbReference>
<dbReference type="EMBL" id="CH471071">
    <property type="protein sequence ID" value="EAW58470.1"/>
    <property type="molecule type" value="Genomic_DNA"/>
</dbReference>
<dbReference type="EMBL" id="BC020950">
    <property type="protein sequence ID" value="AAH20950.1"/>
    <property type="molecule type" value="mRNA"/>
</dbReference>
<dbReference type="EMBL" id="BC098141">
    <property type="protein sequence ID" value="AAH98141.1"/>
    <property type="molecule type" value="mRNA"/>
</dbReference>
<dbReference type="EMBL" id="BC098316">
    <property type="protein sequence ID" value="AAH98316.1"/>
    <property type="molecule type" value="mRNA"/>
</dbReference>
<dbReference type="EMBL" id="BC099726">
    <property type="protein sequence ID" value="AAH99726.1"/>
    <property type="molecule type" value="mRNA"/>
</dbReference>
<dbReference type="EMBL" id="BC100668">
    <property type="protein sequence ID" value="AAI00669.1"/>
    <property type="molecule type" value="mRNA"/>
</dbReference>
<dbReference type="CCDS" id="CCDS55303.1">
    <molecule id="Q9NZ09-4"/>
</dbReference>
<dbReference type="CCDS" id="CCDS6550.1">
    <molecule id="Q9NZ09-1"/>
</dbReference>
<dbReference type="RefSeq" id="NP_001164672.1">
    <molecule id="Q9NZ09-4"/>
    <property type="nucleotide sequence ID" value="NM_001171201.1"/>
</dbReference>
<dbReference type="RefSeq" id="NP_001164673.1">
    <molecule id="Q9NZ09-3"/>
    <property type="nucleotide sequence ID" value="NM_001171202.1"/>
</dbReference>
<dbReference type="RefSeq" id="NP_001164674.1">
    <molecule id="Q9NZ09-1"/>
    <property type="nucleotide sequence ID" value="NM_001171203.3"/>
</dbReference>
<dbReference type="RefSeq" id="NP_001164675.1">
    <molecule id="Q9NZ09-1"/>
    <property type="nucleotide sequence ID" value="NM_001171204.3"/>
</dbReference>
<dbReference type="RefSeq" id="NP_057609.2">
    <molecule id="Q9NZ09-1"/>
    <property type="nucleotide sequence ID" value="NM_016525.4"/>
</dbReference>
<dbReference type="RefSeq" id="XP_006716842.1">
    <molecule id="Q9NZ09-1"/>
    <property type="nucleotide sequence ID" value="XM_006716779.5"/>
</dbReference>
<dbReference type="RefSeq" id="XP_011516201.1">
    <property type="nucleotide sequence ID" value="XM_011517899.1"/>
</dbReference>
<dbReference type="RefSeq" id="XP_016870290.1">
    <property type="nucleotide sequence ID" value="XM_017014801.1"/>
</dbReference>
<dbReference type="RefSeq" id="XP_047279413.1">
    <molecule id="Q9NZ09-1"/>
    <property type="nucleotide sequence ID" value="XM_047423457.1"/>
</dbReference>
<dbReference type="RefSeq" id="XP_047279414.1">
    <molecule id="Q9NZ09-1"/>
    <property type="nucleotide sequence ID" value="XM_047423458.1"/>
</dbReference>
<dbReference type="RefSeq" id="XP_054219056.1">
    <molecule id="Q9NZ09-1"/>
    <property type="nucleotide sequence ID" value="XM_054363081.1"/>
</dbReference>
<dbReference type="RefSeq" id="XP_054219057.1">
    <molecule id="Q9NZ09-1"/>
    <property type="nucleotide sequence ID" value="XM_054363082.1"/>
</dbReference>
<dbReference type="PDB" id="1WGN">
    <property type="method" value="NMR"/>
    <property type="chains" value="A=381-430"/>
</dbReference>
<dbReference type="PDB" id="4AE4">
    <property type="method" value="X-ray"/>
    <property type="resolution" value="1.65 A"/>
    <property type="chains" value="A/B=389-502"/>
</dbReference>
<dbReference type="PDB" id="5LM1">
    <property type="method" value="X-ray"/>
    <property type="resolution" value="2.55 A"/>
    <property type="chains" value="B=261-280"/>
</dbReference>
<dbReference type="PDBsum" id="1WGN"/>
<dbReference type="PDBsum" id="4AE4"/>
<dbReference type="PDBsum" id="5LM1"/>
<dbReference type="BMRB" id="Q9NZ09"/>
<dbReference type="SMR" id="Q9NZ09"/>
<dbReference type="BioGRID" id="119424">
    <property type="interactions" value="40"/>
</dbReference>
<dbReference type="ComplexPortal" id="CPX-7181">
    <property type="entry name" value="ESCRT-I complex, VPS37A-UBAP1 variant"/>
</dbReference>
<dbReference type="ComplexPortal" id="CPX-7201">
    <property type="entry name" value="ESCRT-I complex, VPS37B-UBAP1 variant"/>
</dbReference>
<dbReference type="ComplexPortal" id="CPX-7202">
    <property type="entry name" value="ESCRT-I complex, VPS37C-UBAP1 variant"/>
</dbReference>
<dbReference type="ComplexPortal" id="CPX-7203">
    <property type="entry name" value="ESCRT-I complex, VPS37D-UBAP1 variant"/>
</dbReference>
<dbReference type="DIP" id="DIP-47291N"/>
<dbReference type="FunCoup" id="Q9NZ09">
    <property type="interactions" value="2949"/>
</dbReference>
<dbReference type="IntAct" id="Q9NZ09">
    <property type="interactions" value="14"/>
</dbReference>
<dbReference type="MINT" id="Q9NZ09"/>
<dbReference type="STRING" id="9606.ENSP00000486574"/>
<dbReference type="GlyGen" id="Q9NZ09">
    <property type="glycosylation" value="2 sites, 1 O-linked glycan (1 site)"/>
</dbReference>
<dbReference type="iPTMnet" id="Q9NZ09"/>
<dbReference type="PhosphoSitePlus" id="Q9NZ09"/>
<dbReference type="BioMuta" id="UBAP1"/>
<dbReference type="DMDM" id="67475018"/>
<dbReference type="jPOST" id="Q9NZ09"/>
<dbReference type="MassIVE" id="Q9NZ09"/>
<dbReference type="PaxDb" id="9606-ENSP00000297661"/>
<dbReference type="PeptideAtlas" id="Q9NZ09"/>
<dbReference type="ProteomicsDB" id="24396"/>
<dbReference type="ProteomicsDB" id="25363"/>
<dbReference type="ProteomicsDB" id="83314">
    <molecule id="Q9NZ09-1"/>
</dbReference>
<dbReference type="ProteomicsDB" id="83315">
    <molecule id="Q9NZ09-2"/>
</dbReference>
<dbReference type="Pumba" id="Q9NZ09"/>
<dbReference type="Antibodypedia" id="11158">
    <property type="antibodies" value="208 antibodies from 30 providers"/>
</dbReference>
<dbReference type="DNASU" id="51271"/>
<dbReference type="Ensembl" id="ENST00000297661.9">
    <molecule id="Q9NZ09-1"/>
    <property type="protein sequence ID" value="ENSP00000297661.4"/>
    <property type="gene ID" value="ENSG00000165006.14"/>
</dbReference>
<dbReference type="Ensembl" id="ENST00000359544.2">
    <molecule id="Q9NZ09-1"/>
    <property type="protein sequence ID" value="ENSP00000352541.2"/>
    <property type="gene ID" value="ENSG00000165006.14"/>
</dbReference>
<dbReference type="Ensembl" id="ENST00000379186.8">
    <molecule id="Q9NZ09-2"/>
    <property type="protein sequence ID" value="ENSP00000368484.3"/>
    <property type="gene ID" value="ENSG00000165006.14"/>
</dbReference>
<dbReference type="Ensembl" id="ENST00000625521.2">
    <molecule id="Q9NZ09-4"/>
    <property type="protein sequence ID" value="ENSP00000486574.1"/>
    <property type="gene ID" value="ENSG00000165006.14"/>
</dbReference>
<dbReference type="GeneID" id="51271"/>
<dbReference type="KEGG" id="hsa:51271"/>
<dbReference type="MANE-Select" id="ENST00000297661.9">
    <property type="protein sequence ID" value="ENSP00000297661.4"/>
    <property type="RefSeq nucleotide sequence ID" value="NM_016525.5"/>
    <property type="RefSeq protein sequence ID" value="NP_057609.2"/>
</dbReference>
<dbReference type="UCSC" id="uc003ztx.4">
    <molecule id="Q9NZ09-1"/>
    <property type="organism name" value="human"/>
</dbReference>
<dbReference type="AGR" id="HGNC:12461"/>
<dbReference type="CTD" id="51271"/>
<dbReference type="DisGeNET" id="51271"/>
<dbReference type="GeneCards" id="UBAP1"/>
<dbReference type="HGNC" id="HGNC:12461">
    <property type="gene designation" value="UBAP1"/>
</dbReference>
<dbReference type="HPA" id="ENSG00000165006">
    <property type="expression patterns" value="Low tissue specificity"/>
</dbReference>
<dbReference type="MalaCards" id="UBAP1"/>
<dbReference type="MIM" id="609787">
    <property type="type" value="gene"/>
</dbReference>
<dbReference type="MIM" id="618418">
    <property type="type" value="phenotype"/>
</dbReference>
<dbReference type="neXtProt" id="NX_Q9NZ09"/>
<dbReference type="OpenTargets" id="ENSG00000165006"/>
<dbReference type="Orphanet" id="100993">
    <property type="disease" value="Autosomal dominant spastic paraplegia type 12"/>
</dbReference>
<dbReference type="Orphanet" id="631068">
    <property type="disease" value="Autosomal dominant spastic paraplegia type 80"/>
</dbReference>
<dbReference type="PharmGKB" id="PA37111"/>
<dbReference type="VEuPathDB" id="HostDB:ENSG00000165006"/>
<dbReference type="eggNOG" id="ENOG502QTJC">
    <property type="taxonomic scope" value="Eukaryota"/>
</dbReference>
<dbReference type="GeneTree" id="ENSGT00390000008092"/>
<dbReference type="HOGENOM" id="CLU_041679_0_0_1"/>
<dbReference type="InParanoid" id="Q9NZ09"/>
<dbReference type="OMA" id="ENWKPWP"/>
<dbReference type="OrthoDB" id="2018023at2759"/>
<dbReference type="PAN-GO" id="Q9NZ09">
    <property type="GO annotations" value="3 GO annotations based on evolutionary models"/>
</dbReference>
<dbReference type="PhylomeDB" id="Q9NZ09"/>
<dbReference type="TreeFam" id="TF329247"/>
<dbReference type="PathwayCommons" id="Q9NZ09"/>
<dbReference type="Reactome" id="R-HSA-162588">
    <property type="pathway name" value="Budding and maturation of HIV virion"/>
</dbReference>
<dbReference type="Reactome" id="R-HSA-174490">
    <property type="pathway name" value="Membrane binding and targetting of GAG proteins"/>
</dbReference>
<dbReference type="Reactome" id="R-HSA-917729">
    <property type="pathway name" value="Endosomal Sorting Complex Required For Transport (ESCRT)"/>
</dbReference>
<dbReference type="Reactome" id="R-HSA-9610379">
    <property type="pathway name" value="HCMV Late Events"/>
</dbReference>
<dbReference type="Reactome" id="R-HSA-9615710">
    <property type="pathway name" value="Late endosomal microautophagy"/>
</dbReference>
<dbReference type="SignaLink" id="Q9NZ09"/>
<dbReference type="BioGRID-ORCS" id="51271">
    <property type="hits" value="618 hits in 1163 CRISPR screens"/>
</dbReference>
<dbReference type="ChiTaRS" id="UBAP1">
    <property type="organism name" value="human"/>
</dbReference>
<dbReference type="EvolutionaryTrace" id="Q9NZ09"/>
<dbReference type="GeneWiki" id="UBAP1"/>
<dbReference type="GenomeRNAi" id="51271"/>
<dbReference type="Pharos" id="Q9NZ09">
    <property type="development level" value="Tbio"/>
</dbReference>
<dbReference type="PRO" id="PR:Q9NZ09"/>
<dbReference type="Proteomes" id="UP000005640">
    <property type="component" value="Chromosome 9"/>
</dbReference>
<dbReference type="RNAct" id="Q9NZ09">
    <property type="molecule type" value="protein"/>
</dbReference>
<dbReference type="Bgee" id="ENSG00000165006">
    <property type="expression patterns" value="Expressed in lower esophagus mucosa and 200 other cell types or tissues"/>
</dbReference>
<dbReference type="ExpressionAtlas" id="Q9NZ09">
    <property type="expression patterns" value="baseline and differential"/>
</dbReference>
<dbReference type="GO" id="GO:0005737">
    <property type="term" value="C:cytoplasm"/>
    <property type="evidence" value="ECO:0000314"/>
    <property type="project" value="LIFEdb"/>
</dbReference>
<dbReference type="GO" id="GO:0005829">
    <property type="term" value="C:cytosol"/>
    <property type="evidence" value="ECO:0000314"/>
    <property type="project" value="HPA"/>
</dbReference>
<dbReference type="GO" id="GO:0010008">
    <property type="term" value="C:endosome membrane"/>
    <property type="evidence" value="ECO:0000304"/>
    <property type="project" value="Reactome"/>
</dbReference>
<dbReference type="GO" id="GO:0000813">
    <property type="term" value="C:ESCRT I complex"/>
    <property type="evidence" value="ECO:0000314"/>
    <property type="project" value="UniProtKB"/>
</dbReference>
<dbReference type="GO" id="GO:0043231">
    <property type="term" value="C:intracellular membrane-bounded organelle"/>
    <property type="evidence" value="ECO:0000314"/>
    <property type="project" value="HPA"/>
</dbReference>
<dbReference type="GO" id="GO:0005886">
    <property type="term" value="C:plasma membrane"/>
    <property type="evidence" value="ECO:0000314"/>
    <property type="project" value="HPA"/>
</dbReference>
<dbReference type="GO" id="GO:0043130">
    <property type="term" value="F:ubiquitin binding"/>
    <property type="evidence" value="ECO:0000314"/>
    <property type="project" value="UniProtKB"/>
</dbReference>
<dbReference type="GO" id="GO:0090148">
    <property type="term" value="P:membrane fission"/>
    <property type="evidence" value="ECO:0000303"/>
    <property type="project" value="ComplexPortal"/>
</dbReference>
<dbReference type="GO" id="GO:0036258">
    <property type="term" value="P:multivesicular body assembly"/>
    <property type="evidence" value="ECO:0000303"/>
    <property type="project" value="ComplexPortal"/>
</dbReference>
<dbReference type="GO" id="GO:0043328">
    <property type="term" value="P:protein transport to vacuole involved in ubiquitin-dependent protein catabolic process via the multivesicular body sorting pathway"/>
    <property type="evidence" value="ECO:0000303"/>
    <property type="project" value="ComplexPortal"/>
</dbReference>
<dbReference type="GO" id="GO:0043162">
    <property type="term" value="P:ubiquitin-dependent protein catabolic process via the multivesicular body sorting pathway"/>
    <property type="evidence" value="ECO:0000315"/>
    <property type="project" value="UniProtKB"/>
</dbReference>
<dbReference type="CDD" id="cd14315">
    <property type="entry name" value="UBA1_UBAP1"/>
    <property type="match status" value="1"/>
</dbReference>
<dbReference type="CDD" id="cd14316">
    <property type="entry name" value="UBA2_UBAP1_like"/>
    <property type="match status" value="1"/>
</dbReference>
<dbReference type="FunFam" id="1.20.120.1920:FF:000001">
    <property type="entry name" value="Ubiquitin associated protein 1"/>
    <property type="match status" value="1"/>
</dbReference>
<dbReference type="Gene3D" id="1.20.120.1920">
    <property type="entry name" value="UBAP1 SOUBA domain"/>
    <property type="match status" value="1"/>
</dbReference>
<dbReference type="InterPro" id="IPR015940">
    <property type="entry name" value="UBA"/>
</dbReference>
<dbReference type="InterPro" id="IPR009060">
    <property type="entry name" value="UBA-like_sf"/>
</dbReference>
<dbReference type="InterPro" id="IPR049467">
    <property type="entry name" value="UBAP-1-like_UBA2"/>
</dbReference>
<dbReference type="InterPro" id="IPR038870">
    <property type="entry name" value="UBAP1"/>
</dbReference>
<dbReference type="InterPro" id="IPR042575">
    <property type="entry name" value="UBAP1_C"/>
</dbReference>
<dbReference type="InterPro" id="IPR023340">
    <property type="entry name" value="UMA"/>
</dbReference>
<dbReference type="PANTHER" id="PTHR15960">
    <property type="entry name" value="LD44032P"/>
    <property type="match status" value="1"/>
</dbReference>
<dbReference type="PANTHER" id="PTHR15960:SF2">
    <property type="entry name" value="UBIQUITIN-ASSOCIATED PROTEIN 1"/>
    <property type="match status" value="1"/>
</dbReference>
<dbReference type="Pfam" id="PF22567">
    <property type="entry name" value="UBA_9"/>
    <property type="match status" value="1"/>
</dbReference>
<dbReference type="Pfam" id="PF21267">
    <property type="entry name" value="UBAP-1_UBA2"/>
    <property type="match status" value="1"/>
</dbReference>
<dbReference type="SUPFAM" id="SSF46934">
    <property type="entry name" value="UBA-like"/>
    <property type="match status" value="2"/>
</dbReference>
<dbReference type="PROSITE" id="PS50030">
    <property type="entry name" value="UBA"/>
    <property type="match status" value="2"/>
</dbReference>
<dbReference type="PROSITE" id="PS51497">
    <property type="entry name" value="UMA"/>
    <property type="match status" value="1"/>
</dbReference>